<accession>Q5HQJ3</accession>
<feature type="chain" id="PRO_0000303227" description="Uncharacterized protein SERP0556">
    <location>
        <begin position="1"/>
        <end position="301"/>
    </location>
</feature>
<feature type="binding site" evidence="1">
    <location>
        <position position="146"/>
    </location>
    <ligand>
        <name>a divalent metal cation</name>
        <dbReference type="ChEBI" id="CHEBI:60240"/>
    </ligand>
</feature>
<feature type="binding site" evidence="1">
    <location>
        <position position="148"/>
    </location>
    <ligand>
        <name>a divalent metal cation</name>
        <dbReference type="ChEBI" id="CHEBI:60240"/>
    </ligand>
</feature>
<feature type="binding site" evidence="1">
    <location>
        <position position="177"/>
    </location>
    <ligand>
        <name>a divalent metal cation</name>
        <dbReference type="ChEBI" id="CHEBI:60240"/>
    </ligand>
</feature>
<reference key="1">
    <citation type="journal article" date="2005" name="J. Bacteriol.">
        <title>Insights on evolution of virulence and resistance from the complete genome analysis of an early methicillin-resistant Staphylococcus aureus strain and a biofilm-producing methicillin-resistant Staphylococcus epidermidis strain.</title>
        <authorList>
            <person name="Gill S.R."/>
            <person name="Fouts D.E."/>
            <person name="Archer G.L."/>
            <person name="Mongodin E.F."/>
            <person name="DeBoy R.T."/>
            <person name="Ravel J."/>
            <person name="Paulsen I.T."/>
            <person name="Kolonay J.F."/>
            <person name="Brinkac L.M."/>
            <person name="Beanan M.J."/>
            <person name="Dodson R.J."/>
            <person name="Daugherty S.C."/>
            <person name="Madupu R."/>
            <person name="Angiuoli S.V."/>
            <person name="Durkin A.S."/>
            <person name="Haft D.H."/>
            <person name="Vamathevan J.J."/>
            <person name="Khouri H."/>
            <person name="Utterback T.R."/>
            <person name="Lee C."/>
            <person name="Dimitrov G."/>
            <person name="Jiang L."/>
            <person name="Qin H."/>
            <person name="Weidman J."/>
            <person name="Tran K."/>
            <person name="Kang K.H."/>
            <person name="Hance I.R."/>
            <person name="Nelson K.E."/>
            <person name="Fraser C.M."/>
        </authorList>
    </citation>
    <scope>NUCLEOTIDE SEQUENCE [LARGE SCALE GENOMIC DNA]</scope>
    <source>
        <strain>ATCC 35984 / DSM 28319 / BCRC 17069 / CCUG 31568 / BM 3577 / RP62A</strain>
    </source>
</reference>
<name>Y556_STAEQ</name>
<proteinExistence type="inferred from homology"/>
<gene>
    <name type="ordered locus">SERP0556</name>
</gene>
<keyword id="KW-0479">Metal-binding</keyword>
<keyword id="KW-1185">Reference proteome</keyword>
<protein>
    <recommendedName>
        <fullName>Uncharacterized protein SERP0556</fullName>
    </recommendedName>
</protein>
<sequence length="301" mass="33221">MKFLSFKHNDRTSYGVKVKREDAVWDLPMVFAEFGDKDFNPKTLIAGLQQNQTLDFQEQVRKAVVAAEESGRDEEFKLLFTDIDFLPPVTPPNNVIAFGRNYEDHASELNHEVDSLYVFTKAASSLTGDEATIPNHKDITEQLDYEGELGIVIGKSGEKIPRGLALDYIYGYTIINDITDRTAQSSHDQAFLSKSLTGACPMGPYIVTKDELPAPENVNIVTKVNNEIRQDGNTGEMILKIDELIEKISKYVALHPGDIIATGTPAGVGAGLQPPQFLQPGDEVKVTIDNIGTLTTYISKN</sequence>
<evidence type="ECO:0000250" key="1"/>
<evidence type="ECO:0000305" key="2"/>
<comment type="similarity">
    <text evidence="2">Belongs to the FAH family.</text>
</comment>
<organism>
    <name type="scientific">Staphylococcus epidermidis (strain ATCC 35984 / DSM 28319 / BCRC 17069 / CCUG 31568 / BM 3577 / RP62A)</name>
    <dbReference type="NCBI Taxonomy" id="176279"/>
    <lineage>
        <taxon>Bacteria</taxon>
        <taxon>Bacillati</taxon>
        <taxon>Bacillota</taxon>
        <taxon>Bacilli</taxon>
        <taxon>Bacillales</taxon>
        <taxon>Staphylococcaceae</taxon>
        <taxon>Staphylococcus</taxon>
    </lineage>
</organism>
<dbReference type="EMBL" id="CP000029">
    <property type="protein sequence ID" value="AAW53935.1"/>
    <property type="molecule type" value="Genomic_DNA"/>
</dbReference>
<dbReference type="RefSeq" id="WP_001831933.1">
    <property type="nucleotide sequence ID" value="NC_002976.3"/>
</dbReference>
<dbReference type="SMR" id="Q5HQJ3"/>
<dbReference type="STRING" id="176279.SERP0556"/>
<dbReference type="KEGG" id="ser:SERP0556"/>
<dbReference type="eggNOG" id="COG0179">
    <property type="taxonomic scope" value="Bacteria"/>
</dbReference>
<dbReference type="HOGENOM" id="CLU_028458_3_0_9"/>
<dbReference type="Proteomes" id="UP000000531">
    <property type="component" value="Chromosome"/>
</dbReference>
<dbReference type="GO" id="GO:0018773">
    <property type="term" value="F:acetylpyruvate hydrolase activity"/>
    <property type="evidence" value="ECO:0007669"/>
    <property type="project" value="TreeGrafter"/>
</dbReference>
<dbReference type="GO" id="GO:0046872">
    <property type="term" value="F:metal ion binding"/>
    <property type="evidence" value="ECO:0007669"/>
    <property type="project" value="UniProtKB-KW"/>
</dbReference>
<dbReference type="FunFam" id="3.90.850.10:FF:000010">
    <property type="entry name" value="FAA hydrolase family protein"/>
    <property type="match status" value="1"/>
</dbReference>
<dbReference type="Gene3D" id="3.90.850.10">
    <property type="entry name" value="Fumarylacetoacetase-like, C-terminal domain"/>
    <property type="match status" value="1"/>
</dbReference>
<dbReference type="InterPro" id="IPR011234">
    <property type="entry name" value="Fumarylacetoacetase-like_C"/>
</dbReference>
<dbReference type="InterPro" id="IPR036663">
    <property type="entry name" value="Fumarylacetoacetase_C_sf"/>
</dbReference>
<dbReference type="PANTHER" id="PTHR11820">
    <property type="entry name" value="ACYLPYRUVASE"/>
    <property type="match status" value="1"/>
</dbReference>
<dbReference type="PANTHER" id="PTHR11820:SF7">
    <property type="entry name" value="ACYLPYRUVASE FAHD1, MITOCHONDRIAL"/>
    <property type="match status" value="1"/>
</dbReference>
<dbReference type="Pfam" id="PF01557">
    <property type="entry name" value="FAA_hydrolase"/>
    <property type="match status" value="1"/>
</dbReference>
<dbReference type="SUPFAM" id="SSF56529">
    <property type="entry name" value="FAH"/>
    <property type="match status" value="1"/>
</dbReference>